<proteinExistence type="inferred from homology"/>
<name>COBQ_ACIET</name>
<gene>
    <name evidence="1" type="primary">cobQ</name>
    <name type="ordered locus">Dtpsy_2529</name>
</gene>
<protein>
    <recommendedName>
        <fullName evidence="1">Cobyric acid synthase</fullName>
    </recommendedName>
</protein>
<reference key="1">
    <citation type="submission" date="2009-01" db="EMBL/GenBank/DDBJ databases">
        <title>Complete sequence of Diaphorobacter sp. TPSY.</title>
        <authorList>
            <consortium name="US DOE Joint Genome Institute"/>
            <person name="Lucas S."/>
            <person name="Copeland A."/>
            <person name="Lapidus A."/>
            <person name="Glavina del Rio T."/>
            <person name="Tice H."/>
            <person name="Bruce D."/>
            <person name="Goodwin L."/>
            <person name="Pitluck S."/>
            <person name="Chertkov O."/>
            <person name="Brettin T."/>
            <person name="Detter J.C."/>
            <person name="Han C."/>
            <person name="Larimer F."/>
            <person name="Land M."/>
            <person name="Hauser L."/>
            <person name="Kyrpides N."/>
            <person name="Mikhailova N."/>
            <person name="Coates J.D."/>
        </authorList>
    </citation>
    <scope>NUCLEOTIDE SEQUENCE [LARGE SCALE GENOMIC DNA]</scope>
    <source>
        <strain>TPSY</strain>
    </source>
</reference>
<sequence>MSARCIMVLGTTSGAGKSWLATALCRHYSNQGLKVAPFKAQNMSNNARVVAAPGGEGSEAGGFGAWGEIGSAQYFQALAARAVPDVRMNPLLLKPEADTHSQVVLLGQVSDALSQMPWRGRSEKVWPQIAAALDALRAENDVVVIEGAGSPAEINLHASDIVNMRVARHAQARCLLVTDIDRGGAFAHLYGTWALLPADERALIAGFVLNKFRGDEALLAPAPQMLQDKTGVPVVATIPMQWDHGLPEEDGVFDDRARASGAVHTRIAVVAYPRISNLDEFQPLKNVPGVRLSWARSPADVHGADWIILPGSKATAADLAWLRAQGLDAAIAAHAARGGRVLGVCGGLQMLGEALIDTVGVDGNGPGLGLLPLVTSFEATKTVRPTRQCFGAVQGAWRHLAGVAVQGYEIHHGQTAQHPAMAASGDVARELIPGLAWQNPGGNVLGLYLHGLFEDAAVLRALFGADAPTLDAVFEGLAAGIARHFEPGVLDALAVQ</sequence>
<dbReference type="EMBL" id="CP001392">
    <property type="protein sequence ID" value="ACM33964.1"/>
    <property type="molecule type" value="Genomic_DNA"/>
</dbReference>
<dbReference type="RefSeq" id="WP_015913897.1">
    <property type="nucleotide sequence ID" value="NC_011992.1"/>
</dbReference>
<dbReference type="KEGG" id="dia:Dtpsy_2529"/>
<dbReference type="eggNOG" id="COG1492">
    <property type="taxonomic scope" value="Bacteria"/>
</dbReference>
<dbReference type="HOGENOM" id="CLU_019250_2_1_4"/>
<dbReference type="UniPathway" id="UPA00148"/>
<dbReference type="Proteomes" id="UP000000450">
    <property type="component" value="Chromosome"/>
</dbReference>
<dbReference type="GO" id="GO:0015420">
    <property type="term" value="F:ABC-type vitamin B12 transporter activity"/>
    <property type="evidence" value="ECO:0007669"/>
    <property type="project" value="UniProtKB-UniRule"/>
</dbReference>
<dbReference type="GO" id="GO:0003824">
    <property type="term" value="F:catalytic activity"/>
    <property type="evidence" value="ECO:0007669"/>
    <property type="project" value="InterPro"/>
</dbReference>
<dbReference type="GO" id="GO:0009236">
    <property type="term" value="P:cobalamin biosynthetic process"/>
    <property type="evidence" value="ECO:0007669"/>
    <property type="project" value="UniProtKB-UniRule"/>
</dbReference>
<dbReference type="CDD" id="cd05389">
    <property type="entry name" value="CobQ_N"/>
    <property type="match status" value="1"/>
</dbReference>
<dbReference type="CDD" id="cd01750">
    <property type="entry name" value="GATase1_CobQ"/>
    <property type="match status" value="1"/>
</dbReference>
<dbReference type="Gene3D" id="3.40.50.880">
    <property type="match status" value="1"/>
</dbReference>
<dbReference type="Gene3D" id="3.40.50.300">
    <property type="entry name" value="P-loop containing nucleotide triphosphate hydrolases"/>
    <property type="match status" value="1"/>
</dbReference>
<dbReference type="HAMAP" id="MF_00028">
    <property type="entry name" value="CobQ"/>
    <property type="match status" value="1"/>
</dbReference>
<dbReference type="InterPro" id="IPR029062">
    <property type="entry name" value="Class_I_gatase-like"/>
</dbReference>
<dbReference type="InterPro" id="IPR002586">
    <property type="entry name" value="CobQ/CobB/MinD/ParA_Nub-bd_dom"/>
</dbReference>
<dbReference type="InterPro" id="IPR033949">
    <property type="entry name" value="CobQ_GATase1"/>
</dbReference>
<dbReference type="InterPro" id="IPR047045">
    <property type="entry name" value="CobQ_N"/>
</dbReference>
<dbReference type="InterPro" id="IPR004459">
    <property type="entry name" value="CobQ_synth"/>
</dbReference>
<dbReference type="InterPro" id="IPR011698">
    <property type="entry name" value="GATase_3"/>
</dbReference>
<dbReference type="InterPro" id="IPR027417">
    <property type="entry name" value="P-loop_NTPase"/>
</dbReference>
<dbReference type="NCBIfam" id="TIGR00313">
    <property type="entry name" value="cobQ"/>
    <property type="match status" value="1"/>
</dbReference>
<dbReference type="NCBIfam" id="NF001989">
    <property type="entry name" value="PRK00784.1"/>
    <property type="match status" value="1"/>
</dbReference>
<dbReference type="PANTHER" id="PTHR21343:SF1">
    <property type="entry name" value="COBYRIC ACID SYNTHASE"/>
    <property type="match status" value="1"/>
</dbReference>
<dbReference type="PANTHER" id="PTHR21343">
    <property type="entry name" value="DETHIOBIOTIN SYNTHETASE"/>
    <property type="match status" value="1"/>
</dbReference>
<dbReference type="Pfam" id="PF01656">
    <property type="entry name" value="CbiA"/>
    <property type="match status" value="1"/>
</dbReference>
<dbReference type="Pfam" id="PF07685">
    <property type="entry name" value="GATase_3"/>
    <property type="match status" value="1"/>
</dbReference>
<dbReference type="SUPFAM" id="SSF52317">
    <property type="entry name" value="Class I glutamine amidotransferase-like"/>
    <property type="match status" value="1"/>
</dbReference>
<dbReference type="SUPFAM" id="SSF52540">
    <property type="entry name" value="P-loop containing nucleoside triphosphate hydrolases"/>
    <property type="match status" value="1"/>
</dbReference>
<dbReference type="PROSITE" id="PS51274">
    <property type="entry name" value="GATASE_COBBQ"/>
    <property type="match status" value="1"/>
</dbReference>
<evidence type="ECO:0000255" key="1">
    <source>
        <dbReference type="HAMAP-Rule" id="MF_00028"/>
    </source>
</evidence>
<accession>B9MD32</accession>
<comment type="function">
    <text evidence="1">Catalyzes amidations at positions B, D, E, and G on adenosylcobyrinic A,C-diamide. NH(2) groups are provided by glutamine, and one molecule of ATP is hydrogenolyzed for each amidation.</text>
</comment>
<comment type="pathway">
    <text evidence="1">Cofactor biosynthesis; adenosylcobalamin biosynthesis.</text>
</comment>
<comment type="similarity">
    <text evidence="1">Belongs to the CobB/CobQ family. CobQ subfamily.</text>
</comment>
<feature type="chain" id="PRO_1000116906" description="Cobyric acid synthase">
    <location>
        <begin position="1"/>
        <end position="496"/>
    </location>
</feature>
<feature type="domain" description="GATase cobBQ-type" evidence="1">
    <location>
        <begin position="264"/>
        <end position="458"/>
    </location>
</feature>
<feature type="active site" description="Nucleophile" evidence="1">
    <location>
        <position position="345"/>
    </location>
</feature>
<feature type="active site" evidence="1">
    <location>
        <position position="450"/>
    </location>
</feature>
<keyword id="KW-0169">Cobalamin biosynthesis</keyword>
<keyword id="KW-0315">Glutamine amidotransferase</keyword>
<keyword id="KW-1185">Reference proteome</keyword>
<organism>
    <name type="scientific">Acidovorax ebreus (strain TPSY)</name>
    <name type="common">Diaphorobacter sp. (strain TPSY)</name>
    <dbReference type="NCBI Taxonomy" id="535289"/>
    <lineage>
        <taxon>Bacteria</taxon>
        <taxon>Pseudomonadati</taxon>
        <taxon>Pseudomonadota</taxon>
        <taxon>Betaproteobacteria</taxon>
        <taxon>Burkholderiales</taxon>
        <taxon>Comamonadaceae</taxon>
        <taxon>Diaphorobacter</taxon>
    </lineage>
</organism>